<organism>
    <name type="scientific">Swinepox virus (strain Kasza)</name>
    <name type="common">SWPV</name>
    <dbReference type="NCBI Taxonomy" id="10277"/>
    <lineage>
        <taxon>Viruses</taxon>
        <taxon>Varidnaviria</taxon>
        <taxon>Bamfordvirae</taxon>
        <taxon>Nucleocytoviricota</taxon>
        <taxon>Pokkesviricetes</taxon>
        <taxon>Chitovirales</taxon>
        <taxon>Poxviridae</taxon>
        <taxon>Chordopoxvirinae</taxon>
        <taxon>Suipoxvirus</taxon>
        <taxon>Swinepox virus</taxon>
    </lineage>
</organism>
<organismHost>
    <name type="scientific">Sus scrofa</name>
    <name type="common">Pig</name>
    <dbReference type="NCBI Taxonomy" id="9823"/>
</organismHost>
<accession>P32230</accession>
<sequence>MLSYIINPLLSIVYFILGNVSKLLTYILMKIMIFLLRAVNPYSLISNRGWLSLDSINPFKKEKRRESFLSSLNPFRKEETKKKEGFFSGWFG</sequence>
<feature type="chain" id="PRO_0000099750" description="Uncharacterized protein C2">
    <location>
        <begin position="1"/>
        <end position="92"/>
    </location>
</feature>
<name>VC02_SWPVK</name>
<proteinExistence type="predicted"/>
<reference key="1">
    <citation type="journal article" date="1993" name="Virology">
        <title>DNA sequence analysis of conserved and unique regions of swinepox virus: identification of genetic elements supporting phenotypic observations including a novel G protein-coupled receptor homologue.</title>
        <authorList>
            <person name="Massung R.F."/>
            <person name="Jayarama V."/>
            <person name="Moyer R.W."/>
        </authorList>
    </citation>
    <scope>NUCLEOTIDE SEQUENCE [GENOMIC DNA]</scope>
</reference>
<dbReference type="EMBL" id="L22013">
    <property type="protein sequence ID" value="AAC37869.1"/>
    <property type="molecule type" value="Genomic_DNA"/>
</dbReference>
<dbReference type="EMBL" id="L21931">
    <property type="protein sequence ID" value="AAC37874.1"/>
    <property type="molecule type" value="Genomic_DNA"/>
</dbReference>
<dbReference type="KEGG" id="vg:932387"/>
<dbReference type="KEGG" id="vg:932423"/>
<dbReference type="InterPro" id="IPR020320">
    <property type="entry name" value="Swinepox_virus_C2"/>
</dbReference>
<dbReference type="Pfam" id="PF17421">
    <property type="entry name" value="DUF5409"/>
    <property type="match status" value="1"/>
</dbReference>
<protein>
    <recommendedName>
        <fullName>Uncharacterized protein C2</fullName>
    </recommendedName>
</protein>
<comment type="function">
    <text>Homolog of shope fibroma virus T4A ORF.</text>
</comment>
<gene>
    <name type="ORF">C2L</name>
    <name type="ORF">K3R</name>
</gene>